<proteinExistence type="inferred from homology"/>
<protein>
    <recommendedName>
        <fullName>DNA polymerase III subunit alpha</fullName>
        <ecNumber>2.7.7.7</ecNumber>
    </recommendedName>
</protein>
<comment type="function">
    <text evidence="1">DNA polymerase III is a complex, multichain enzyme responsible for most of the replicative synthesis in bacteria. This DNA polymerase also exhibits 3' to 5' exonuclease activity. The alpha chain is the DNA polymerase (By similarity).</text>
</comment>
<comment type="catalytic activity">
    <reaction>
        <text>DNA(n) + a 2'-deoxyribonucleoside 5'-triphosphate = DNA(n+1) + diphosphate</text>
        <dbReference type="Rhea" id="RHEA:22508"/>
        <dbReference type="Rhea" id="RHEA-COMP:17339"/>
        <dbReference type="Rhea" id="RHEA-COMP:17340"/>
        <dbReference type="ChEBI" id="CHEBI:33019"/>
        <dbReference type="ChEBI" id="CHEBI:61560"/>
        <dbReference type="ChEBI" id="CHEBI:173112"/>
        <dbReference type="EC" id="2.7.7.7"/>
    </reaction>
</comment>
<comment type="subunit">
    <text evidence="1">DNA polymerase III contains a core (composed of alpha, epsilon and theta chains) that associates with a tau subunit. This core dimerizes to form the PolIII' complex. PolIII' associates with the gamma complex (composed of gamma, delta, delta', psi and chi chains) and with the beta chain to form the complete DNA polymerase III complex (By similarity).</text>
</comment>
<comment type="subcellular location">
    <subcellularLocation>
        <location evidence="1">Cytoplasm</location>
    </subcellularLocation>
</comment>
<comment type="similarity">
    <text evidence="2">Belongs to the DNA polymerase type-C family. DnaE subfamily.</text>
</comment>
<reference key="1">
    <citation type="journal article" date="2002" name="Proc. Natl. Acad. Sci. U.S.A.">
        <title>Genome sequence and comparative microarray analysis of serotype M18 group A Streptococcus strains associated with acute rheumatic fever outbreaks.</title>
        <authorList>
            <person name="Smoot J.C."/>
            <person name="Barbian K.D."/>
            <person name="Van Gompel J.J."/>
            <person name="Smoot L.M."/>
            <person name="Chaussee M.S."/>
            <person name="Sylva G.L."/>
            <person name="Sturdevant D.E."/>
            <person name="Ricklefs S.M."/>
            <person name="Porcella S.F."/>
            <person name="Parkins L.D."/>
            <person name="Beres S.B."/>
            <person name="Campbell D.S."/>
            <person name="Smith T.M."/>
            <person name="Zhang Q."/>
            <person name="Kapur V."/>
            <person name="Daly J.A."/>
            <person name="Veasy L.G."/>
            <person name="Musser J.M."/>
        </authorList>
    </citation>
    <scope>NUCLEOTIDE SEQUENCE [LARGE SCALE GENOMIC DNA]</scope>
    <source>
        <strain>MGAS8232</strain>
    </source>
</reference>
<accession>Q8P0S5</accession>
<dbReference type="EC" id="2.7.7.7"/>
<dbReference type="EMBL" id="AE009949">
    <property type="protein sequence ID" value="AAL97842.1"/>
    <property type="molecule type" value="Genomic_DNA"/>
</dbReference>
<dbReference type="RefSeq" id="WP_011017834.1">
    <property type="nucleotide sequence ID" value="NC_003485.1"/>
</dbReference>
<dbReference type="SMR" id="Q8P0S5"/>
<dbReference type="KEGG" id="spm:spyM18_1232"/>
<dbReference type="HOGENOM" id="CLU_001600_0_0_9"/>
<dbReference type="GO" id="GO:0005737">
    <property type="term" value="C:cytoplasm"/>
    <property type="evidence" value="ECO:0007669"/>
    <property type="project" value="UniProtKB-SubCell"/>
</dbReference>
<dbReference type="GO" id="GO:0008408">
    <property type="term" value="F:3'-5' exonuclease activity"/>
    <property type="evidence" value="ECO:0007669"/>
    <property type="project" value="InterPro"/>
</dbReference>
<dbReference type="GO" id="GO:0003887">
    <property type="term" value="F:DNA-directed DNA polymerase activity"/>
    <property type="evidence" value="ECO:0007669"/>
    <property type="project" value="UniProtKB-KW"/>
</dbReference>
<dbReference type="GO" id="GO:0003676">
    <property type="term" value="F:nucleic acid binding"/>
    <property type="evidence" value="ECO:0007669"/>
    <property type="project" value="InterPro"/>
</dbReference>
<dbReference type="GO" id="GO:0006260">
    <property type="term" value="P:DNA replication"/>
    <property type="evidence" value="ECO:0007669"/>
    <property type="project" value="UniProtKB-KW"/>
</dbReference>
<dbReference type="CDD" id="cd04485">
    <property type="entry name" value="DnaE_OBF"/>
    <property type="match status" value="1"/>
</dbReference>
<dbReference type="CDD" id="cd07431">
    <property type="entry name" value="PHP_PolIIIA"/>
    <property type="match status" value="1"/>
</dbReference>
<dbReference type="Gene3D" id="1.10.150.870">
    <property type="match status" value="1"/>
</dbReference>
<dbReference type="Gene3D" id="1.10.10.1600">
    <property type="entry name" value="Bacterial DNA polymerase III alpha subunit, thumb domain"/>
    <property type="match status" value="1"/>
</dbReference>
<dbReference type="Gene3D" id="3.20.20.140">
    <property type="entry name" value="Metal-dependent hydrolases"/>
    <property type="match status" value="1"/>
</dbReference>
<dbReference type="Gene3D" id="2.40.50.140">
    <property type="entry name" value="Nucleic acid-binding proteins"/>
    <property type="match status" value="1"/>
</dbReference>
<dbReference type="InterPro" id="IPR011708">
    <property type="entry name" value="DNA_pol3_alpha_NTPase_dom"/>
</dbReference>
<dbReference type="InterPro" id="IPR041931">
    <property type="entry name" value="DNA_pol3_alpha_thumb_dom"/>
</dbReference>
<dbReference type="InterPro" id="IPR040982">
    <property type="entry name" value="DNA_pol3_finger"/>
</dbReference>
<dbReference type="InterPro" id="IPR004805">
    <property type="entry name" value="DnaE2/DnaE/PolC"/>
</dbReference>
<dbReference type="InterPro" id="IPR029460">
    <property type="entry name" value="DNAPol_HHH"/>
</dbReference>
<dbReference type="InterPro" id="IPR012340">
    <property type="entry name" value="NA-bd_OB-fold"/>
</dbReference>
<dbReference type="InterPro" id="IPR004365">
    <property type="entry name" value="NA-bd_OB_tRNA"/>
</dbReference>
<dbReference type="InterPro" id="IPR004013">
    <property type="entry name" value="PHP_dom"/>
</dbReference>
<dbReference type="InterPro" id="IPR003141">
    <property type="entry name" value="Pol/His_phosphatase_N"/>
</dbReference>
<dbReference type="InterPro" id="IPR016195">
    <property type="entry name" value="Pol/histidinol_Pase-like"/>
</dbReference>
<dbReference type="NCBIfam" id="TIGR00594">
    <property type="entry name" value="polc"/>
    <property type="match status" value="1"/>
</dbReference>
<dbReference type="NCBIfam" id="NF005582">
    <property type="entry name" value="PRK07279.1"/>
    <property type="match status" value="1"/>
</dbReference>
<dbReference type="PANTHER" id="PTHR32294">
    <property type="entry name" value="DNA POLYMERASE III SUBUNIT ALPHA"/>
    <property type="match status" value="1"/>
</dbReference>
<dbReference type="PANTHER" id="PTHR32294:SF0">
    <property type="entry name" value="DNA POLYMERASE III SUBUNIT ALPHA"/>
    <property type="match status" value="1"/>
</dbReference>
<dbReference type="Pfam" id="PF07733">
    <property type="entry name" value="DNA_pol3_alpha"/>
    <property type="match status" value="1"/>
</dbReference>
<dbReference type="Pfam" id="PF17657">
    <property type="entry name" value="DNA_pol3_finger"/>
    <property type="match status" value="1"/>
</dbReference>
<dbReference type="Pfam" id="PF14579">
    <property type="entry name" value="HHH_6"/>
    <property type="match status" value="1"/>
</dbReference>
<dbReference type="Pfam" id="PF02811">
    <property type="entry name" value="PHP"/>
    <property type="match status" value="1"/>
</dbReference>
<dbReference type="Pfam" id="PF01336">
    <property type="entry name" value="tRNA_anti-codon"/>
    <property type="match status" value="1"/>
</dbReference>
<dbReference type="SMART" id="SM00481">
    <property type="entry name" value="POLIIIAc"/>
    <property type="match status" value="1"/>
</dbReference>
<dbReference type="SUPFAM" id="SSF89550">
    <property type="entry name" value="PHP domain-like"/>
    <property type="match status" value="1"/>
</dbReference>
<keyword id="KW-0963">Cytoplasm</keyword>
<keyword id="KW-0235">DNA replication</keyword>
<keyword id="KW-0239">DNA-directed DNA polymerase</keyword>
<keyword id="KW-0548">Nucleotidyltransferase</keyword>
<keyword id="KW-0808">Transferase</keyword>
<name>DPO3A_STRP8</name>
<organism>
    <name type="scientific">Streptococcus pyogenes serotype M18 (strain MGAS8232)</name>
    <dbReference type="NCBI Taxonomy" id="186103"/>
    <lineage>
        <taxon>Bacteria</taxon>
        <taxon>Bacillati</taxon>
        <taxon>Bacillota</taxon>
        <taxon>Bacilli</taxon>
        <taxon>Lactobacillales</taxon>
        <taxon>Streptococcaceae</taxon>
        <taxon>Streptococcus</taxon>
    </lineage>
</organism>
<feature type="chain" id="PRO_0000103353" description="DNA polymerase III subunit alpha">
    <location>
        <begin position="1"/>
        <end position="1036"/>
    </location>
</feature>
<sequence length="1036" mass="119187">MFAQLDTKTVYSFMDSLIDLNHYFERAKQFGYHTIGIMDKDNLYGAYHFIKGCQKNGLQPVLGLEVEILYQERQVLLNLIAQNTQGYHQLLKISTAKMSGKLHMDYLCQHLEGIAVIIPSKGWSDTLVVPFDYYIGVDQYTDLSHMDSKRQLIPLRTVRYFAQDDMETLHMLHAIRDNLSLAETPVVESDQELADCQQLTTFYQTHCPQALQNLEDLVSGIYYDFDTNLKLPHFNRDKSAKQELQDLTEAGLKEKGLWKEPYQSRLLHELVIISDMGFDDYFLIVWDLLRFGRSKGYYMGMGRGSAAGSLVAYALDITGIDPVQHDLLFERFLNKERYSMPDIDIDLPDIYRSEFLRYVRNRYGSDHSAQIVTFSTFGPKQAIRDVFKRFGVPEYELTNLTKKIGFKDSLATVYEKSISFRQVINSRTEFQKAFAIAKRIEGNPRQTSIHAAGIVMSDDTLTNHIPLKSGDDMMITQYDAHAVEANGLLKMDFLGLRNLTFVQKMQEKVAKDYGCQIDIAAIDLEDPQTLALFAKGDTKGIFQFEQNGAINLLKRIKPQRFEEIVATTSLNRPGASDYTTNFIKRREGQEKIDLIDPVIAPILEPTYGIMLYQEQVMQIAQVYAGFTLGKADLLRRAMSKKNLQEMQKMEEDFIASAKHLGRAEETARGLFKRMEKFAGYGFNRSHAFAYSALAFQLAYFKAHYPAVFYDIMMNYSSSDYITDALESDFQVAQVTINSIPYTDKIEASKIYMGLKNIKGLPRDFAYWIIEQRPFNSVEDFLTRTPEKYQKKVFLEPLIKIGLFDYFEPNRKKILDNLDGLLVFVNELGSLFSDSSFSWVDTKDYSATEKYSLEQEIVGVGMSKHPLIDIAEKSTQTFTPISQLVKESEAVVLIQIDSIRIIRTKTSGQQMAFLSVNDTKKKLDVTLFPQEYAIYKDQLKEGEFYYLKGRIKERDHRLQMVCQQVQMAISQKYWLLVENHQFDSQISEILGAFPGTTPVVIHYQKNKETIALTKIQVHVTENLKEKLRPFVLKTVFR</sequence>
<gene>
    <name type="primary">dnaE</name>
    <name type="ordered locus">spyM18_1232</name>
</gene>
<evidence type="ECO:0000250" key="1"/>
<evidence type="ECO:0000305" key="2"/>